<reference key="1">
    <citation type="journal article" date="2004" name="Nature">
        <title>Genome evolution in yeasts.</title>
        <authorList>
            <person name="Dujon B."/>
            <person name="Sherman D."/>
            <person name="Fischer G."/>
            <person name="Durrens P."/>
            <person name="Casaregola S."/>
            <person name="Lafontaine I."/>
            <person name="de Montigny J."/>
            <person name="Marck C."/>
            <person name="Neuveglise C."/>
            <person name="Talla E."/>
            <person name="Goffard N."/>
            <person name="Frangeul L."/>
            <person name="Aigle M."/>
            <person name="Anthouard V."/>
            <person name="Babour A."/>
            <person name="Barbe V."/>
            <person name="Barnay S."/>
            <person name="Blanchin S."/>
            <person name="Beckerich J.-M."/>
            <person name="Beyne E."/>
            <person name="Bleykasten C."/>
            <person name="Boisrame A."/>
            <person name="Boyer J."/>
            <person name="Cattolico L."/>
            <person name="Confanioleri F."/>
            <person name="de Daruvar A."/>
            <person name="Despons L."/>
            <person name="Fabre E."/>
            <person name="Fairhead C."/>
            <person name="Ferry-Dumazet H."/>
            <person name="Groppi A."/>
            <person name="Hantraye F."/>
            <person name="Hennequin C."/>
            <person name="Jauniaux N."/>
            <person name="Joyet P."/>
            <person name="Kachouri R."/>
            <person name="Kerrest A."/>
            <person name="Koszul R."/>
            <person name="Lemaire M."/>
            <person name="Lesur I."/>
            <person name="Ma L."/>
            <person name="Muller H."/>
            <person name="Nicaud J.-M."/>
            <person name="Nikolski M."/>
            <person name="Oztas S."/>
            <person name="Ozier-Kalogeropoulos O."/>
            <person name="Pellenz S."/>
            <person name="Potier S."/>
            <person name="Richard G.-F."/>
            <person name="Straub M.-L."/>
            <person name="Suleau A."/>
            <person name="Swennen D."/>
            <person name="Tekaia F."/>
            <person name="Wesolowski-Louvel M."/>
            <person name="Westhof E."/>
            <person name="Wirth B."/>
            <person name="Zeniou-Meyer M."/>
            <person name="Zivanovic Y."/>
            <person name="Bolotin-Fukuhara M."/>
            <person name="Thierry A."/>
            <person name="Bouchier C."/>
            <person name="Caudron B."/>
            <person name="Scarpelli C."/>
            <person name="Gaillardin C."/>
            <person name="Weissenbach J."/>
            <person name="Wincker P."/>
            <person name="Souciet J.-L."/>
        </authorList>
    </citation>
    <scope>NUCLEOTIDE SEQUENCE [LARGE SCALE GENOMIC DNA]</scope>
    <source>
        <strain>ATCC 8585 / CBS 2359 / DSM 70799 / NBRC 1267 / NRRL Y-1140 / WM37</strain>
    </source>
</reference>
<sequence length="85" mass="9816">MSSELTPLQRSVLDKYRFLAESLRELSETLSDLNNTHEDSKPEAILQEMREIEVKISLVSTLLKGSVYSLVIQRRMDHQQKPSDL</sequence>
<organism>
    <name type="scientific">Kluyveromyces lactis (strain ATCC 8585 / CBS 2359 / DSM 70799 / NBRC 1267 / NRRL Y-1140 / WM37)</name>
    <name type="common">Yeast</name>
    <name type="synonym">Candida sphaerica</name>
    <dbReference type="NCBI Taxonomy" id="284590"/>
    <lineage>
        <taxon>Eukaryota</taxon>
        <taxon>Fungi</taxon>
        <taxon>Dikarya</taxon>
        <taxon>Ascomycota</taxon>
        <taxon>Saccharomycotina</taxon>
        <taxon>Saccharomycetes</taxon>
        <taxon>Saccharomycetales</taxon>
        <taxon>Saccharomycetaceae</taxon>
        <taxon>Kluyveromyces</taxon>
    </lineage>
</organism>
<evidence type="ECO:0000250" key="1">
    <source>
        <dbReference type="UniProtKB" id="P62505"/>
    </source>
</evidence>
<evidence type="ECO:0000250" key="2">
    <source>
        <dbReference type="UniProtKB" id="P69850"/>
    </source>
</evidence>
<evidence type="ECO:0000255" key="3"/>
<evidence type="ECO:0000305" key="4"/>
<accession>Q6CKH5</accession>
<keyword id="KW-0131">Cell cycle</keyword>
<keyword id="KW-0132">Cell division</keyword>
<keyword id="KW-0137">Centromere</keyword>
<keyword id="KW-0158">Chromosome</keyword>
<keyword id="KW-0159">Chromosome partition</keyword>
<keyword id="KW-0175">Coiled coil</keyword>
<keyword id="KW-0963">Cytoplasm</keyword>
<keyword id="KW-0206">Cytoskeleton</keyword>
<keyword id="KW-0995">Kinetochore</keyword>
<keyword id="KW-0493">Microtubule</keyword>
<keyword id="KW-0498">Mitosis</keyword>
<keyword id="KW-0539">Nucleus</keyword>
<keyword id="KW-1185">Reference proteome</keyword>
<dbReference type="EMBL" id="CR382126">
    <property type="protein sequence ID" value="CAG98272.1"/>
    <property type="molecule type" value="Genomic_DNA"/>
</dbReference>
<dbReference type="RefSeq" id="XP_455564.1">
    <property type="nucleotide sequence ID" value="XM_455564.1"/>
</dbReference>
<dbReference type="SMR" id="Q6CKH5"/>
<dbReference type="FunCoup" id="Q6CKH5">
    <property type="interactions" value="17"/>
</dbReference>
<dbReference type="STRING" id="284590.Q6CKH5"/>
<dbReference type="PaxDb" id="284590-Q6CKH5"/>
<dbReference type="KEGG" id="kla:KLLA0_F10637g"/>
<dbReference type="eggNOG" id="ENOG502S7SV">
    <property type="taxonomic scope" value="Eukaryota"/>
</dbReference>
<dbReference type="HOGENOM" id="CLU_118180_2_1_1"/>
<dbReference type="InParanoid" id="Q6CKH5"/>
<dbReference type="OMA" id="RNMHISQ"/>
<dbReference type="Proteomes" id="UP000000598">
    <property type="component" value="Chromosome F"/>
</dbReference>
<dbReference type="GO" id="GO:0005737">
    <property type="term" value="C:cytoplasm"/>
    <property type="evidence" value="ECO:0007669"/>
    <property type="project" value="UniProtKB-KW"/>
</dbReference>
<dbReference type="GO" id="GO:0042729">
    <property type="term" value="C:DASH complex"/>
    <property type="evidence" value="ECO:0000250"/>
    <property type="project" value="UniProtKB"/>
</dbReference>
<dbReference type="GO" id="GO:0005874">
    <property type="term" value="C:microtubule"/>
    <property type="evidence" value="ECO:0007669"/>
    <property type="project" value="UniProtKB-KW"/>
</dbReference>
<dbReference type="GO" id="GO:0072686">
    <property type="term" value="C:mitotic spindle"/>
    <property type="evidence" value="ECO:0007669"/>
    <property type="project" value="InterPro"/>
</dbReference>
<dbReference type="GO" id="GO:0051010">
    <property type="term" value="F:microtubule plus-end binding"/>
    <property type="evidence" value="ECO:0007669"/>
    <property type="project" value="TreeGrafter"/>
</dbReference>
<dbReference type="GO" id="GO:0008608">
    <property type="term" value="P:attachment of spindle microtubules to kinetochore"/>
    <property type="evidence" value="ECO:0000250"/>
    <property type="project" value="UniProtKB"/>
</dbReference>
<dbReference type="GO" id="GO:0051301">
    <property type="term" value="P:cell division"/>
    <property type="evidence" value="ECO:0007669"/>
    <property type="project" value="UniProtKB-KW"/>
</dbReference>
<dbReference type="GO" id="GO:1990758">
    <property type="term" value="P:mitotic sister chromatid biorientation"/>
    <property type="evidence" value="ECO:0000250"/>
    <property type="project" value="UniProtKB"/>
</dbReference>
<dbReference type="GO" id="GO:1990976">
    <property type="term" value="P:protein transport along microtubule to mitotic spindle pole body"/>
    <property type="evidence" value="ECO:0000250"/>
    <property type="project" value="UniProtKB"/>
</dbReference>
<dbReference type="InterPro" id="IPR013965">
    <property type="entry name" value="DASH_Dad3"/>
</dbReference>
<dbReference type="PANTHER" id="PTHR28017">
    <property type="entry name" value="DASH COMPLEX SUBUNIT DAD3"/>
    <property type="match status" value="1"/>
</dbReference>
<dbReference type="PANTHER" id="PTHR28017:SF1">
    <property type="entry name" value="DASH COMPLEX SUBUNIT DAD3"/>
    <property type="match status" value="1"/>
</dbReference>
<dbReference type="Pfam" id="PF08656">
    <property type="entry name" value="DASH_Dad3"/>
    <property type="match status" value="1"/>
</dbReference>
<protein>
    <recommendedName>
        <fullName>DASH complex subunit DAD3</fullName>
    </recommendedName>
    <alternativeName>
        <fullName>Outer kinetochore protein DAD3</fullName>
    </alternativeName>
</protein>
<feature type="chain" id="PRO_0000175949" description="DASH complex subunit DAD3">
    <location>
        <begin position="1"/>
        <end position="85"/>
    </location>
</feature>
<feature type="coiled-coil region" evidence="3">
    <location>
        <begin position="13"/>
        <end position="41"/>
    </location>
</feature>
<gene>
    <name type="primary">DAD3</name>
    <name type="ordered locus">KLLA0F10637g</name>
</gene>
<proteinExistence type="inferred from homology"/>
<name>DAD3_KLULA</name>
<comment type="function">
    <text evidence="2">Component of the DASH complex that connects microtubules with kinetochores and couples microtubule depolymerisation to chromosome movement; it is involved in retrieving kinetochores to the spindle poles before their re-orientation on the spindle in early mitosis and allows microtubule depolymerization to pull chromosomes apart and resist detachment during anaphase. Kinetochores, consisting of a centromere-associated inner segment and a microtubule-contacting outer segment, play a crucial role in chromosome segregation by mediating the physical connection between centromeric DNA and microtubules. Kinetochores also serve as an input point for the spindle assembly checkpoint, which delays anaphase until all chromosomes have bioriented on the mitotic spindle.</text>
</comment>
<comment type="subunit">
    <text evidence="1 2">Component of the DASH complex consisting of ASK1, DAD1, DAD2, DAD3, DAD4, DAM1, DUO1, HSK3, SPC19 and SPC34, with a stoichiometry of one copy of each subunit per complex. Multiple DASH complexes oligomerize to form a ring that encircles spindle microtubules and organizes the rod-like NDC80 complexes of the outer kinetochore. DASH complex oligomerization strengthens microtubule attachments (By similarity). On cytoplasmic microtubules, DASH complexes appear to form patches instead of rings (By similarity).</text>
</comment>
<comment type="subcellular location">
    <subcellularLocation>
        <location evidence="2">Nucleus</location>
    </subcellularLocation>
    <subcellularLocation>
        <location evidence="2">Cytoplasm</location>
        <location evidence="2">Cytoskeleton</location>
        <location evidence="2">Spindle</location>
    </subcellularLocation>
    <subcellularLocation>
        <location evidence="2">Chromosome</location>
        <location evidence="2">Centromere</location>
        <location evidence="2">Kinetochore</location>
    </subcellularLocation>
</comment>
<comment type="similarity">
    <text evidence="4">Belongs to the DASH complex DAD3 family.</text>
</comment>